<name>SYK_SHESH</name>
<accession>A8FRH9</accession>
<sequence>MTEQVQDENKLIAERRAKLEHIRENCPANGHPNTFDRKHKAADIQAEFGNNTKEELEGMGIVRSIAGRVMAKRGPFLVIQDVSGRIQAYAGKDVQKDLKAKFQGLDIGDIIGVTGQLHLSGKGDLYVNMEEYELLTKALRPLPEKFHGLTDQETRYRQRYIDLIVNEESREAFIMRSKVVSAIRNFMVKKEFMEVETPMMHTIPGGASARPFETHHNALDIAMYLRIAPELYLKRLVVGGFERVFEINRNFRNEGLSPRHNPEFTMMEFYMAYSDYKDLMDLTEEMLSSIATELCGSPKLPYGEHVVDFGGPYARLSMLDAIKKYNPDNATIQSMTYEEVKDVEFMRNLAKSLGMTIEKFWTCGQLLEEIFGETAETQLMQPTFITGYPADISPLARRNDDNHFITDRFEFFIGGREVANGFSELNDAEDQDNRFKAQVDAKDAGDDEAMFYDADYITALEHGLPPTAGQGIGIDRLVMLFTNTHTIRDVILFPAMRPQG</sequence>
<organism>
    <name type="scientific">Shewanella sediminis (strain HAW-EB3)</name>
    <dbReference type="NCBI Taxonomy" id="425104"/>
    <lineage>
        <taxon>Bacteria</taxon>
        <taxon>Pseudomonadati</taxon>
        <taxon>Pseudomonadota</taxon>
        <taxon>Gammaproteobacteria</taxon>
        <taxon>Alteromonadales</taxon>
        <taxon>Shewanellaceae</taxon>
        <taxon>Shewanella</taxon>
    </lineage>
</organism>
<comment type="catalytic activity">
    <reaction evidence="1">
        <text>tRNA(Lys) + L-lysine + ATP = L-lysyl-tRNA(Lys) + AMP + diphosphate</text>
        <dbReference type="Rhea" id="RHEA:20792"/>
        <dbReference type="Rhea" id="RHEA-COMP:9696"/>
        <dbReference type="Rhea" id="RHEA-COMP:9697"/>
        <dbReference type="ChEBI" id="CHEBI:30616"/>
        <dbReference type="ChEBI" id="CHEBI:32551"/>
        <dbReference type="ChEBI" id="CHEBI:33019"/>
        <dbReference type="ChEBI" id="CHEBI:78442"/>
        <dbReference type="ChEBI" id="CHEBI:78529"/>
        <dbReference type="ChEBI" id="CHEBI:456215"/>
        <dbReference type="EC" id="6.1.1.6"/>
    </reaction>
</comment>
<comment type="cofactor">
    <cofactor evidence="1">
        <name>Mg(2+)</name>
        <dbReference type="ChEBI" id="CHEBI:18420"/>
    </cofactor>
    <text evidence="1">Binds 3 Mg(2+) ions per subunit.</text>
</comment>
<comment type="subunit">
    <text evidence="1">Homodimer.</text>
</comment>
<comment type="subcellular location">
    <subcellularLocation>
        <location evidence="1">Cytoplasm</location>
    </subcellularLocation>
</comment>
<comment type="similarity">
    <text evidence="1">Belongs to the class-II aminoacyl-tRNA synthetase family.</text>
</comment>
<dbReference type="EC" id="6.1.1.6" evidence="1"/>
<dbReference type="EMBL" id="CP000821">
    <property type="protein sequence ID" value="ABV35452.1"/>
    <property type="molecule type" value="Genomic_DNA"/>
</dbReference>
<dbReference type="RefSeq" id="WP_012141188.1">
    <property type="nucleotide sequence ID" value="NC_009831.1"/>
</dbReference>
<dbReference type="SMR" id="A8FRH9"/>
<dbReference type="STRING" id="425104.Ssed_0841"/>
<dbReference type="KEGG" id="sse:Ssed_0841"/>
<dbReference type="eggNOG" id="COG1190">
    <property type="taxonomic scope" value="Bacteria"/>
</dbReference>
<dbReference type="HOGENOM" id="CLU_008255_6_0_6"/>
<dbReference type="OrthoDB" id="9802326at2"/>
<dbReference type="Proteomes" id="UP000002015">
    <property type="component" value="Chromosome"/>
</dbReference>
<dbReference type="GO" id="GO:0005829">
    <property type="term" value="C:cytosol"/>
    <property type="evidence" value="ECO:0007669"/>
    <property type="project" value="TreeGrafter"/>
</dbReference>
<dbReference type="GO" id="GO:0005524">
    <property type="term" value="F:ATP binding"/>
    <property type="evidence" value="ECO:0007669"/>
    <property type="project" value="UniProtKB-UniRule"/>
</dbReference>
<dbReference type="GO" id="GO:0004824">
    <property type="term" value="F:lysine-tRNA ligase activity"/>
    <property type="evidence" value="ECO:0007669"/>
    <property type="project" value="UniProtKB-UniRule"/>
</dbReference>
<dbReference type="GO" id="GO:0000287">
    <property type="term" value="F:magnesium ion binding"/>
    <property type="evidence" value="ECO:0007669"/>
    <property type="project" value="UniProtKB-UniRule"/>
</dbReference>
<dbReference type="GO" id="GO:0000049">
    <property type="term" value="F:tRNA binding"/>
    <property type="evidence" value="ECO:0007669"/>
    <property type="project" value="TreeGrafter"/>
</dbReference>
<dbReference type="GO" id="GO:0006430">
    <property type="term" value="P:lysyl-tRNA aminoacylation"/>
    <property type="evidence" value="ECO:0007669"/>
    <property type="project" value="UniProtKB-UniRule"/>
</dbReference>
<dbReference type="CDD" id="cd00775">
    <property type="entry name" value="LysRS_core"/>
    <property type="match status" value="1"/>
</dbReference>
<dbReference type="CDD" id="cd04322">
    <property type="entry name" value="LysRS_N"/>
    <property type="match status" value="1"/>
</dbReference>
<dbReference type="FunFam" id="2.40.50.140:FF:000024">
    <property type="entry name" value="Lysine--tRNA ligase"/>
    <property type="match status" value="1"/>
</dbReference>
<dbReference type="FunFam" id="3.30.930.10:FF:000001">
    <property type="entry name" value="Lysine--tRNA ligase"/>
    <property type="match status" value="1"/>
</dbReference>
<dbReference type="Gene3D" id="3.30.930.10">
    <property type="entry name" value="Bira Bifunctional Protein, Domain 2"/>
    <property type="match status" value="1"/>
</dbReference>
<dbReference type="Gene3D" id="2.40.50.140">
    <property type="entry name" value="Nucleic acid-binding proteins"/>
    <property type="match status" value="1"/>
</dbReference>
<dbReference type="HAMAP" id="MF_00252">
    <property type="entry name" value="Lys_tRNA_synth_class2"/>
    <property type="match status" value="1"/>
</dbReference>
<dbReference type="InterPro" id="IPR004364">
    <property type="entry name" value="Aa-tRNA-synt_II"/>
</dbReference>
<dbReference type="InterPro" id="IPR006195">
    <property type="entry name" value="aa-tRNA-synth_II"/>
</dbReference>
<dbReference type="InterPro" id="IPR045864">
    <property type="entry name" value="aa-tRNA-synth_II/BPL/LPL"/>
</dbReference>
<dbReference type="InterPro" id="IPR002313">
    <property type="entry name" value="Lys-tRNA-ligase_II"/>
</dbReference>
<dbReference type="InterPro" id="IPR044136">
    <property type="entry name" value="Lys-tRNA-ligase_II_N"/>
</dbReference>
<dbReference type="InterPro" id="IPR018149">
    <property type="entry name" value="Lys-tRNA-synth_II_C"/>
</dbReference>
<dbReference type="InterPro" id="IPR012340">
    <property type="entry name" value="NA-bd_OB-fold"/>
</dbReference>
<dbReference type="InterPro" id="IPR004365">
    <property type="entry name" value="NA-bd_OB_tRNA"/>
</dbReference>
<dbReference type="NCBIfam" id="TIGR00499">
    <property type="entry name" value="lysS_bact"/>
    <property type="match status" value="1"/>
</dbReference>
<dbReference type="NCBIfam" id="NF001756">
    <property type="entry name" value="PRK00484.1"/>
    <property type="match status" value="1"/>
</dbReference>
<dbReference type="PANTHER" id="PTHR42918:SF15">
    <property type="entry name" value="LYSINE--TRNA LIGASE, CHLOROPLASTIC_MITOCHONDRIAL"/>
    <property type="match status" value="1"/>
</dbReference>
<dbReference type="PANTHER" id="PTHR42918">
    <property type="entry name" value="LYSYL-TRNA SYNTHETASE"/>
    <property type="match status" value="1"/>
</dbReference>
<dbReference type="Pfam" id="PF00152">
    <property type="entry name" value="tRNA-synt_2"/>
    <property type="match status" value="1"/>
</dbReference>
<dbReference type="Pfam" id="PF01336">
    <property type="entry name" value="tRNA_anti-codon"/>
    <property type="match status" value="1"/>
</dbReference>
<dbReference type="PRINTS" id="PR00982">
    <property type="entry name" value="TRNASYNTHLYS"/>
</dbReference>
<dbReference type="SUPFAM" id="SSF55681">
    <property type="entry name" value="Class II aaRS and biotin synthetases"/>
    <property type="match status" value="1"/>
</dbReference>
<dbReference type="SUPFAM" id="SSF50249">
    <property type="entry name" value="Nucleic acid-binding proteins"/>
    <property type="match status" value="1"/>
</dbReference>
<dbReference type="PROSITE" id="PS50862">
    <property type="entry name" value="AA_TRNA_LIGASE_II"/>
    <property type="match status" value="1"/>
</dbReference>
<evidence type="ECO:0000255" key="1">
    <source>
        <dbReference type="HAMAP-Rule" id="MF_00252"/>
    </source>
</evidence>
<proteinExistence type="inferred from homology"/>
<protein>
    <recommendedName>
        <fullName evidence="1">Lysine--tRNA ligase</fullName>
        <ecNumber evidence="1">6.1.1.6</ecNumber>
    </recommendedName>
    <alternativeName>
        <fullName evidence="1">Lysyl-tRNA synthetase</fullName>
        <shortName evidence="1">LysRS</shortName>
    </alternativeName>
</protein>
<reference key="1">
    <citation type="submission" date="2007-08" db="EMBL/GenBank/DDBJ databases">
        <title>Complete sequence of Shewanella sediminis HAW-EB3.</title>
        <authorList>
            <consortium name="US DOE Joint Genome Institute"/>
            <person name="Copeland A."/>
            <person name="Lucas S."/>
            <person name="Lapidus A."/>
            <person name="Barry K."/>
            <person name="Glavina del Rio T."/>
            <person name="Dalin E."/>
            <person name="Tice H."/>
            <person name="Pitluck S."/>
            <person name="Chertkov O."/>
            <person name="Brettin T."/>
            <person name="Bruce D."/>
            <person name="Detter J.C."/>
            <person name="Han C."/>
            <person name="Schmutz J."/>
            <person name="Larimer F."/>
            <person name="Land M."/>
            <person name="Hauser L."/>
            <person name="Kyrpides N."/>
            <person name="Kim E."/>
            <person name="Zhao J.-S."/>
            <person name="Richardson P."/>
        </authorList>
    </citation>
    <scope>NUCLEOTIDE SEQUENCE [LARGE SCALE GENOMIC DNA]</scope>
    <source>
        <strain>HAW-EB3</strain>
    </source>
</reference>
<keyword id="KW-0030">Aminoacyl-tRNA synthetase</keyword>
<keyword id="KW-0067">ATP-binding</keyword>
<keyword id="KW-0963">Cytoplasm</keyword>
<keyword id="KW-0436">Ligase</keyword>
<keyword id="KW-0460">Magnesium</keyword>
<keyword id="KW-0479">Metal-binding</keyword>
<keyword id="KW-0547">Nucleotide-binding</keyword>
<keyword id="KW-0648">Protein biosynthesis</keyword>
<keyword id="KW-1185">Reference proteome</keyword>
<feature type="chain" id="PRO_1000078512" description="Lysine--tRNA ligase">
    <location>
        <begin position="1"/>
        <end position="500"/>
    </location>
</feature>
<feature type="binding site" evidence="1">
    <location>
        <position position="410"/>
    </location>
    <ligand>
        <name>Mg(2+)</name>
        <dbReference type="ChEBI" id="CHEBI:18420"/>
        <label>1</label>
    </ligand>
</feature>
<feature type="binding site" evidence="1">
    <location>
        <position position="417"/>
    </location>
    <ligand>
        <name>Mg(2+)</name>
        <dbReference type="ChEBI" id="CHEBI:18420"/>
        <label>1</label>
    </ligand>
</feature>
<feature type="binding site" evidence="1">
    <location>
        <position position="417"/>
    </location>
    <ligand>
        <name>Mg(2+)</name>
        <dbReference type="ChEBI" id="CHEBI:18420"/>
        <label>2</label>
    </ligand>
</feature>
<gene>
    <name evidence="1" type="primary">lysS</name>
    <name type="ordered locus">Ssed_0841</name>
</gene>